<comment type="function">
    <text evidence="1">NDH-1 shuttles electrons from NADH, via FMN and iron-sulfur (Fe-S) centers, to quinones in the respiratory chain. The immediate electron acceptor for the enzyme in this species is believed to be ubiquinone. Couples the redox reaction to proton translocation (for every two electrons transferred, four hydrogen ions are translocated across the cytoplasmic membrane), and thus conserves the redox energy in a proton gradient.</text>
</comment>
<comment type="catalytic activity">
    <reaction evidence="1">
        <text>a quinone + NADH + 5 H(+)(in) = a quinol + NAD(+) + 4 H(+)(out)</text>
        <dbReference type="Rhea" id="RHEA:57888"/>
        <dbReference type="ChEBI" id="CHEBI:15378"/>
        <dbReference type="ChEBI" id="CHEBI:24646"/>
        <dbReference type="ChEBI" id="CHEBI:57540"/>
        <dbReference type="ChEBI" id="CHEBI:57945"/>
        <dbReference type="ChEBI" id="CHEBI:132124"/>
    </reaction>
</comment>
<comment type="subunit">
    <text evidence="1">NDH-1 is composed of 14 different subunits. Subunits NuoB, C, D, E, F, and G constitute the peripheral sector of the complex.</text>
</comment>
<comment type="subcellular location">
    <subcellularLocation>
        <location evidence="1">Cell inner membrane</location>
        <topology evidence="1">Peripheral membrane protein</topology>
        <orientation evidence="1">Cytoplasmic side</orientation>
    </subcellularLocation>
</comment>
<comment type="similarity">
    <text evidence="1">Belongs to the complex I 49 kDa subunit family.</text>
</comment>
<comment type="sequence caution" evidence="2">
    <conflict type="erroneous initiation">
        <sequence resource="EMBL-CDS" id="ABV74825"/>
    </conflict>
</comment>
<gene>
    <name evidence="1" type="primary">nuoD</name>
    <name type="ordered locus">A1C_02650</name>
</gene>
<evidence type="ECO:0000255" key="1">
    <source>
        <dbReference type="HAMAP-Rule" id="MF_01358"/>
    </source>
</evidence>
<evidence type="ECO:0000305" key="2"/>
<keyword id="KW-0997">Cell inner membrane</keyword>
<keyword id="KW-1003">Cell membrane</keyword>
<keyword id="KW-0472">Membrane</keyword>
<keyword id="KW-0520">NAD</keyword>
<keyword id="KW-0874">Quinone</keyword>
<keyword id="KW-1278">Translocase</keyword>
<keyword id="KW-0813">Transport</keyword>
<keyword id="KW-0830">Ubiquinone</keyword>
<organism>
    <name type="scientific">Rickettsia akari (strain Hartford)</name>
    <dbReference type="NCBI Taxonomy" id="293614"/>
    <lineage>
        <taxon>Bacteria</taxon>
        <taxon>Pseudomonadati</taxon>
        <taxon>Pseudomonadota</taxon>
        <taxon>Alphaproteobacteria</taxon>
        <taxon>Rickettsiales</taxon>
        <taxon>Rickettsiaceae</taxon>
        <taxon>Rickettsieae</taxon>
        <taxon>Rickettsia</taxon>
        <taxon>spotted fever group</taxon>
    </lineage>
</organism>
<name>NUOD_RICAH</name>
<feature type="chain" id="PRO_0000357910" description="NADH-quinone oxidoreductase subunit D">
    <location>
        <begin position="1"/>
        <end position="391"/>
    </location>
</feature>
<dbReference type="EC" id="7.1.1.-" evidence="1"/>
<dbReference type="EMBL" id="CP000847">
    <property type="protein sequence ID" value="ABV74825.1"/>
    <property type="status" value="ALT_INIT"/>
    <property type="molecule type" value="Genomic_DNA"/>
</dbReference>
<dbReference type="RefSeq" id="WP_041816829.1">
    <property type="nucleotide sequence ID" value="NC_009881.1"/>
</dbReference>
<dbReference type="SMR" id="A8GN50"/>
<dbReference type="STRING" id="293614.A1C_02650"/>
<dbReference type="KEGG" id="rak:A1C_02650"/>
<dbReference type="eggNOG" id="COG0649">
    <property type="taxonomic scope" value="Bacteria"/>
</dbReference>
<dbReference type="HOGENOM" id="CLU_015134_1_2_5"/>
<dbReference type="Proteomes" id="UP000006830">
    <property type="component" value="Chromosome"/>
</dbReference>
<dbReference type="GO" id="GO:0005886">
    <property type="term" value="C:plasma membrane"/>
    <property type="evidence" value="ECO:0007669"/>
    <property type="project" value="UniProtKB-SubCell"/>
</dbReference>
<dbReference type="GO" id="GO:0051287">
    <property type="term" value="F:NAD binding"/>
    <property type="evidence" value="ECO:0007669"/>
    <property type="project" value="InterPro"/>
</dbReference>
<dbReference type="GO" id="GO:0050136">
    <property type="term" value="F:NADH:ubiquinone reductase (non-electrogenic) activity"/>
    <property type="evidence" value="ECO:0007669"/>
    <property type="project" value="UniProtKB-UniRule"/>
</dbReference>
<dbReference type="GO" id="GO:0048038">
    <property type="term" value="F:quinone binding"/>
    <property type="evidence" value="ECO:0007669"/>
    <property type="project" value="UniProtKB-KW"/>
</dbReference>
<dbReference type="FunFam" id="1.10.645.10:FF:000005">
    <property type="entry name" value="NADH-quinone oxidoreductase subunit D"/>
    <property type="match status" value="1"/>
</dbReference>
<dbReference type="Gene3D" id="1.10.645.10">
    <property type="entry name" value="Cytochrome-c3 Hydrogenase, chain B"/>
    <property type="match status" value="1"/>
</dbReference>
<dbReference type="HAMAP" id="MF_01358">
    <property type="entry name" value="NDH1_NuoD"/>
    <property type="match status" value="1"/>
</dbReference>
<dbReference type="InterPro" id="IPR001135">
    <property type="entry name" value="NADH_Q_OxRdtase_suD"/>
</dbReference>
<dbReference type="InterPro" id="IPR014029">
    <property type="entry name" value="NADH_UbQ_OxRdtase_49kDa_CS"/>
</dbReference>
<dbReference type="InterPro" id="IPR022885">
    <property type="entry name" value="NDH1_su_D/H"/>
</dbReference>
<dbReference type="InterPro" id="IPR029014">
    <property type="entry name" value="NiFe-Hase_large"/>
</dbReference>
<dbReference type="NCBIfam" id="TIGR01962">
    <property type="entry name" value="NuoD"/>
    <property type="match status" value="1"/>
</dbReference>
<dbReference type="NCBIfam" id="NF004739">
    <property type="entry name" value="PRK06075.1"/>
    <property type="match status" value="1"/>
</dbReference>
<dbReference type="PANTHER" id="PTHR11993:SF10">
    <property type="entry name" value="NADH DEHYDROGENASE [UBIQUINONE] IRON-SULFUR PROTEIN 2, MITOCHONDRIAL"/>
    <property type="match status" value="1"/>
</dbReference>
<dbReference type="PANTHER" id="PTHR11993">
    <property type="entry name" value="NADH-UBIQUINONE OXIDOREDUCTASE 49 KDA SUBUNIT"/>
    <property type="match status" value="1"/>
</dbReference>
<dbReference type="Pfam" id="PF00346">
    <property type="entry name" value="Complex1_49kDa"/>
    <property type="match status" value="1"/>
</dbReference>
<dbReference type="SUPFAM" id="SSF56762">
    <property type="entry name" value="HydB/Nqo4-like"/>
    <property type="match status" value="1"/>
</dbReference>
<dbReference type="PROSITE" id="PS00535">
    <property type="entry name" value="COMPLEX1_49K"/>
    <property type="match status" value="1"/>
</dbReference>
<proteinExistence type="inferred from homology"/>
<sequence length="391" mass="44647">MTNNTKTITLNLGPQHPATHGVLRLILEMDGEIVNNADPHIGLLHRGTEKLIEHKTYLQAIPYFDRLDYVSPMCQEHAFALAVESLLECEVPRRAQFIRVLFSELTRILNHTLNIGSQALDIGATTPLLWLFEEREKIMEFYERVSGSRMHSNYFRPGGVAEDLPDGLLEDIDKFIDQFPPKLHDIESLLNENRLWKQRLVDIGVVSQKEAMDWGFSGPMLRGSGIAWDLRKSNPYDVYDEMEFEVPIGKNGDCYDRYFVRMLEMYESIKIIKQCIEKMPKGAVKTNDPKLTPPTRAKMKESMEAMIHHFKLYTAGYDVPAGETYKAVEAPKGEFGVYLYSQGVNIPYRCRIKSPGFAHLQGLDFMSKGHLMADVITIIATLDIVFGEIDR</sequence>
<reference key="1">
    <citation type="submission" date="2007-09" db="EMBL/GenBank/DDBJ databases">
        <title>Complete genome sequence of Rickettsia akari.</title>
        <authorList>
            <person name="Madan A."/>
            <person name="Fahey J."/>
            <person name="Helton E."/>
            <person name="Ketteman M."/>
            <person name="Madan A."/>
            <person name="Rodrigues S."/>
            <person name="Sanchez A."/>
            <person name="Whiting M."/>
            <person name="Dasch G."/>
            <person name="Eremeeva M."/>
        </authorList>
    </citation>
    <scope>NUCLEOTIDE SEQUENCE [LARGE SCALE GENOMIC DNA]</scope>
    <source>
        <strain>Hartford</strain>
    </source>
</reference>
<protein>
    <recommendedName>
        <fullName evidence="1">NADH-quinone oxidoreductase subunit D</fullName>
        <ecNumber evidence="1">7.1.1.-</ecNumber>
    </recommendedName>
    <alternativeName>
        <fullName evidence="1">NADH dehydrogenase I subunit D</fullName>
    </alternativeName>
    <alternativeName>
        <fullName evidence="1">NDH-1 subunit D</fullName>
    </alternativeName>
</protein>
<accession>A8GN50</accession>